<proteinExistence type="inferred from homology"/>
<sequence>MGFNEFIGKLFGNKATRDMKEIKPWVDKIKAVYPEIAKLSNDELRAKTVELKKYISDSAAEEQKKIEELKGTIETTELEDREGIFAQIDKLEKEVLEKYEKALDDVLPQAFAIVKDTARRFSENPELVVTATDFDRELAAQGKDFVRIEDDKAIWQNHWIAGGNDMVWSMVHYDVQLFGGVVLHKGKIAEMATGEGKTLVATLPVFLNALTGNGVHVVTVNDYLSKRDSEWMGPLYQFHGLSVDCIDKHQPNSDARRRAYMADITFGTNNEFGFDYLRDNMAVSPKDLVQRKHNYAIVDEVDSVLIDDARTPLIISGPVPKGEDQLFEQLRPLVERLFEAQKKLATQYLADAKRLIASDDKKDQEEGFLALFRSHKALPKNKPLIKFLSEQGIKAGMLKTEEIYMEQNNKRMPEATDPLYFVIDEKQNSVDLTDKGIDLITGNAADPTLFVLPDITSQLSALENETDLTEEEKLAKKDELMTNYAIKSERVHTINQLLKAYAMFEKDDEYVVIDGQVKIVDEQTGRIMEGRRYSDGLHQAIEAKEGVKVEAATQTFATITLQNYFRMYHKLSGMTGTAETEAGELWDIYKLDVVVIPTNRPIARKDMNDRVYKTKREKYKAVIEEIEEMVKEGRPVLVGTTSVEISEMLSKMLAMRKIEHNVLNAKLHQREADIVAQAGQKSIVTIATNMAGRGTDIKLSPEVKAAGGLAIIGTERHESRRVDRQLRGRAGRQGDPGSSVFFVSLEDDLMRLFSSDRIASVMDKLGFKEGEMIEHKMISNSIERAQKKVEENNFGIRKRLLEYDDVMNKQRVAVYTKRRHALMGERIGMDIVNMIWDRCAYAVELGDFDNVKMEILQTLAMEVPFTEEEYNKMRKEDLAEKTFEAAMNNFKRKTDRMAQIANPVIKQVYEMQGHMYENIMIPITDGKRLYNISVNLKAAYETEGKEIVKSFEKAILLHTIDDAWKENLRELDELKHSVQNASYEQKDPLLIFKLESVNLFDNMVNKINNNTISVLMRGQIPVQEPEQVREAAPEPQAPRQQYREEKQDLSDPHQQAAAEHDTREVKREPVRAEKTVGRNDPCPCGSGKKYKNCHGQNA</sequence>
<accession>A6L3G1</accession>
<protein>
    <recommendedName>
        <fullName evidence="1">Protein translocase subunit SecA</fullName>
        <ecNumber evidence="1">7.4.2.8</ecNumber>
    </recommendedName>
</protein>
<organism>
    <name type="scientific">Phocaeicola vulgatus (strain ATCC 8482 / DSM 1447 / JCM 5826 / CCUG 4940 / NBRC 14291 / NCTC 11154)</name>
    <name type="common">Bacteroides vulgatus</name>
    <dbReference type="NCBI Taxonomy" id="435590"/>
    <lineage>
        <taxon>Bacteria</taxon>
        <taxon>Pseudomonadati</taxon>
        <taxon>Bacteroidota</taxon>
        <taxon>Bacteroidia</taxon>
        <taxon>Bacteroidales</taxon>
        <taxon>Bacteroidaceae</taxon>
        <taxon>Phocaeicola</taxon>
    </lineage>
</organism>
<reference key="1">
    <citation type="journal article" date="2007" name="PLoS Biol.">
        <title>Evolution of symbiotic bacteria in the distal human intestine.</title>
        <authorList>
            <person name="Xu J."/>
            <person name="Mahowald M.A."/>
            <person name="Ley R.E."/>
            <person name="Lozupone C.A."/>
            <person name="Hamady M."/>
            <person name="Martens E.C."/>
            <person name="Henrissat B."/>
            <person name="Coutinho P.M."/>
            <person name="Minx P."/>
            <person name="Latreille P."/>
            <person name="Cordum H."/>
            <person name="Van Brunt A."/>
            <person name="Kim K."/>
            <person name="Fulton R.S."/>
            <person name="Fulton L.A."/>
            <person name="Clifton S.W."/>
            <person name="Wilson R.K."/>
            <person name="Knight R.D."/>
            <person name="Gordon J.I."/>
        </authorList>
    </citation>
    <scope>NUCLEOTIDE SEQUENCE [LARGE SCALE GENOMIC DNA]</scope>
    <source>
        <strain>ATCC 8482 / DSM 1447 / JCM 5826 / CCUG 4940 / NBRC 14291 / NCTC 11154</strain>
    </source>
</reference>
<evidence type="ECO:0000255" key="1">
    <source>
        <dbReference type="HAMAP-Rule" id="MF_01382"/>
    </source>
</evidence>
<evidence type="ECO:0000256" key="2">
    <source>
        <dbReference type="SAM" id="MobiDB-lite"/>
    </source>
</evidence>
<name>SECA_PHOV8</name>
<keyword id="KW-0067">ATP-binding</keyword>
<keyword id="KW-0997">Cell inner membrane</keyword>
<keyword id="KW-1003">Cell membrane</keyword>
<keyword id="KW-0963">Cytoplasm</keyword>
<keyword id="KW-0472">Membrane</keyword>
<keyword id="KW-0479">Metal-binding</keyword>
<keyword id="KW-0547">Nucleotide-binding</keyword>
<keyword id="KW-0653">Protein transport</keyword>
<keyword id="KW-1278">Translocase</keyword>
<keyword id="KW-0811">Translocation</keyword>
<keyword id="KW-0813">Transport</keyword>
<keyword id="KW-0862">Zinc</keyword>
<dbReference type="EC" id="7.4.2.8" evidence="1"/>
<dbReference type="EMBL" id="CP000139">
    <property type="protein sequence ID" value="ABR40225.1"/>
    <property type="molecule type" value="Genomic_DNA"/>
</dbReference>
<dbReference type="RefSeq" id="WP_005848202.1">
    <property type="nucleotide sequence ID" value="NZ_JANSWM010000107.1"/>
</dbReference>
<dbReference type="SMR" id="A6L3G1"/>
<dbReference type="STRING" id="435590.BVU_2568"/>
<dbReference type="PaxDb" id="435590-BVU_2568"/>
<dbReference type="GeneID" id="5303532"/>
<dbReference type="KEGG" id="bvu:BVU_2568"/>
<dbReference type="eggNOG" id="COG0653">
    <property type="taxonomic scope" value="Bacteria"/>
</dbReference>
<dbReference type="HOGENOM" id="CLU_005314_0_0_10"/>
<dbReference type="BioCyc" id="BVUL435590:G1G59-2672-MONOMER"/>
<dbReference type="Proteomes" id="UP000002861">
    <property type="component" value="Chromosome"/>
</dbReference>
<dbReference type="GO" id="GO:0031522">
    <property type="term" value="C:cell envelope Sec protein transport complex"/>
    <property type="evidence" value="ECO:0007669"/>
    <property type="project" value="TreeGrafter"/>
</dbReference>
<dbReference type="GO" id="GO:0005829">
    <property type="term" value="C:cytosol"/>
    <property type="evidence" value="ECO:0007669"/>
    <property type="project" value="TreeGrafter"/>
</dbReference>
<dbReference type="GO" id="GO:0005886">
    <property type="term" value="C:plasma membrane"/>
    <property type="evidence" value="ECO:0007669"/>
    <property type="project" value="UniProtKB-SubCell"/>
</dbReference>
<dbReference type="GO" id="GO:0005524">
    <property type="term" value="F:ATP binding"/>
    <property type="evidence" value="ECO:0007669"/>
    <property type="project" value="UniProtKB-UniRule"/>
</dbReference>
<dbReference type="GO" id="GO:0046872">
    <property type="term" value="F:metal ion binding"/>
    <property type="evidence" value="ECO:0007669"/>
    <property type="project" value="UniProtKB-KW"/>
</dbReference>
<dbReference type="GO" id="GO:0008564">
    <property type="term" value="F:protein-exporting ATPase activity"/>
    <property type="evidence" value="ECO:0007669"/>
    <property type="project" value="UniProtKB-EC"/>
</dbReference>
<dbReference type="GO" id="GO:0065002">
    <property type="term" value="P:intracellular protein transmembrane transport"/>
    <property type="evidence" value="ECO:0007669"/>
    <property type="project" value="UniProtKB-UniRule"/>
</dbReference>
<dbReference type="GO" id="GO:0017038">
    <property type="term" value="P:protein import"/>
    <property type="evidence" value="ECO:0007669"/>
    <property type="project" value="InterPro"/>
</dbReference>
<dbReference type="GO" id="GO:0006605">
    <property type="term" value="P:protein targeting"/>
    <property type="evidence" value="ECO:0007669"/>
    <property type="project" value="UniProtKB-UniRule"/>
</dbReference>
<dbReference type="GO" id="GO:0043952">
    <property type="term" value="P:protein transport by the Sec complex"/>
    <property type="evidence" value="ECO:0007669"/>
    <property type="project" value="TreeGrafter"/>
</dbReference>
<dbReference type="CDD" id="cd17928">
    <property type="entry name" value="DEXDc_SecA"/>
    <property type="match status" value="1"/>
</dbReference>
<dbReference type="CDD" id="cd18803">
    <property type="entry name" value="SF2_C_secA"/>
    <property type="match status" value="1"/>
</dbReference>
<dbReference type="FunFam" id="3.40.50.300:FF:000246">
    <property type="entry name" value="Preprotein translocase subunit SecA"/>
    <property type="match status" value="1"/>
</dbReference>
<dbReference type="FunFam" id="3.40.50.300:FF:000694">
    <property type="entry name" value="Preprotein translocase subunit SecA"/>
    <property type="match status" value="1"/>
</dbReference>
<dbReference type="FunFam" id="3.90.1440.10:FF:000005">
    <property type="entry name" value="Protein translocase subunit SecA"/>
    <property type="match status" value="1"/>
</dbReference>
<dbReference type="Gene3D" id="1.10.3060.10">
    <property type="entry name" value="Helical scaffold and wing domains of SecA"/>
    <property type="match status" value="1"/>
</dbReference>
<dbReference type="Gene3D" id="3.40.50.300">
    <property type="entry name" value="P-loop containing nucleotide triphosphate hydrolases"/>
    <property type="match status" value="3"/>
</dbReference>
<dbReference type="Gene3D" id="3.90.1440.10">
    <property type="entry name" value="SecA, preprotein cross-linking domain"/>
    <property type="match status" value="1"/>
</dbReference>
<dbReference type="HAMAP" id="MF_01382">
    <property type="entry name" value="SecA"/>
    <property type="match status" value="1"/>
</dbReference>
<dbReference type="InterPro" id="IPR014001">
    <property type="entry name" value="Helicase_ATP-bd"/>
</dbReference>
<dbReference type="InterPro" id="IPR001650">
    <property type="entry name" value="Helicase_C-like"/>
</dbReference>
<dbReference type="InterPro" id="IPR027417">
    <property type="entry name" value="P-loop_NTPase"/>
</dbReference>
<dbReference type="InterPro" id="IPR004027">
    <property type="entry name" value="SEC_C_motif"/>
</dbReference>
<dbReference type="InterPro" id="IPR000185">
    <property type="entry name" value="SecA"/>
</dbReference>
<dbReference type="InterPro" id="IPR020937">
    <property type="entry name" value="SecA_CS"/>
</dbReference>
<dbReference type="InterPro" id="IPR011115">
    <property type="entry name" value="SecA_DEAD"/>
</dbReference>
<dbReference type="InterPro" id="IPR014018">
    <property type="entry name" value="SecA_motor_DEAD"/>
</dbReference>
<dbReference type="InterPro" id="IPR011130">
    <property type="entry name" value="SecA_preprotein_X-link_dom"/>
</dbReference>
<dbReference type="InterPro" id="IPR044722">
    <property type="entry name" value="SecA_SF2_C"/>
</dbReference>
<dbReference type="InterPro" id="IPR011116">
    <property type="entry name" value="SecA_Wing/Scaffold"/>
</dbReference>
<dbReference type="InterPro" id="IPR036266">
    <property type="entry name" value="SecA_Wing/Scaffold_sf"/>
</dbReference>
<dbReference type="InterPro" id="IPR036670">
    <property type="entry name" value="SecA_X-link_sf"/>
</dbReference>
<dbReference type="NCBIfam" id="NF009536">
    <property type="entry name" value="PRK12901.1"/>
    <property type="match status" value="1"/>
</dbReference>
<dbReference type="NCBIfam" id="TIGR00963">
    <property type="entry name" value="secA"/>
    <property type="match status" value="1"/>
</dbReference>
<dbReference type="PANTHER" id="PTHR30612:SF0">
    <property type="entry name" value="CHLOROPLAST PROTEIN-TRANSPORTING ATPASE"/>
    <property type="match status" value="1"/>
</dbReference>
<dbReference type="PANTHER" id="PTHR30612">
    <property type="entry name" value="SECA INNER MEMBRANE COMPONENT OF SEC PROTEIN SECRETION SYSTEM"/>
    <property type="match status" value="1"/>
</dbReference>
<dbReference type="Pfam" id="PF21090">
    <property type="entry name" value="P-loop_SecA"/>
    <property type="match status" value="1"/>
</dbReference>
<dbReference type="Pfam" id="PF02810">
    <property type="entry name" value="SEC-C"/>
    <property type="match status" value="1"/>
</dbReference>
<dbReference type="Pfam" id="PF07517">
    <property type="entry name" value="SecA_DEAD"/>
    <property type="match status" value="1"/>
</dbReference>
<dbReference type="Pfam" id="PF01043">
    <property type="entry name" value="SecA_PP_bind"/>
    <property type="match status" value="1"/>
</dbReference>
<dbReference type="Pfam" id="PF07516">
    <property type="entry name" value="SecA_SW"/>
    <property type="match status" value="1"/>
</dbReference>
<dbReference type="PRINTS" id="PR00906">
    <property type="entry name" value="SECA"/>
</dbReference>
<dbReference type="SMART" id="SM00957">
    <property type="entry name" value="SecA_DEAD"/>
    <property type="match status" value="1"/>
</dbReference>
<dbReference type="SMART" id="SM00958">
    <property type="entry name" value="SecA_PP_bind"/>
    <property type="match status" value="1"/>
</dbReference>
<dbReference type="SUPFAM" id="SSF81886">
    <property type="entry name" value="Helical scaffold and wing domains of SecA"/>
    <property type="match status" value="1"/>
</dbReference>
<dbReference type="SUPFAM" id="SSF52540">
    <property type="entry name" value="P-loop containing nucleoside triphosphate hydrolases"/>
    <property type="match status" value="2"/>
</dbReference>
<dbReference type="SUPFAM" id="SSF81767">
    <property type="entry name" value="Pre-protein crosslinking domain of SecA"/>
    <property type="match status" value="1"/>
</dbReference>
<dbReference type="PROSITE" id="PS01312">
    <property type="entry name" value="SECA"/>
    <property type="match status" value="1"/>
</dbReference>
<dbReference type="PROSITE" id="PS51196">
    <property type="entry name" value="SECA_MOTOR_DEAD"/>
    <property type="match status" value="1"/>
</dbReference>
<gene>
    <name evidence="1" type="primary">secA</name>
    <name type="ordered locus">BVU_2568</name>
</gene>
<comment type="function">
    <text evidence="1">Part of the Sec protein translocase complex. Interacts with the SecYEG preprotein conducting channel. Has a central role in coupling the hydrolysis of ATP to the transfer of proteins into and across the cell membrane, serving as an ATP-driven molecular motor driving the stepwise translocation of polypeptide chains across the membrane.</text>
</comment>
<comment type="catalytic activity">
    <reaction evidence="1">
        <text>ATP + H2O + cellular proteinSide 1 = ADP + phosphate + cellular proteinSide 2.</text>
        <dbReference type="EC" id="7.4.2.8"/>
    </reaction>
</comment>
<comment type="cofactor">
    <cofactor evidence="1">
        <name>Zn(2+)</name>
        <dbReference type="ChEBI" id="CHEBI:29105"/>
    </cofactor>
    <text evidence="1">May bind 1 zinc ion per subunit.</text>
</comment>
<comment type="subunit">
    <text evidence="1">Monomer and homodimer. Part of the essential Sec protein translocation apparatus which comprises SecA, SecYEG and auxiliary proteins SecDF. Other proteins may also be involved.</text>
</comment>
<comment type="subcellular location">
    <subcellularLocation>
        <location evidence="1">Cell inner membrane</location>
        <topology evidence="1">Peripheral membrane protein</topology>
        <orientation evidence="1">Cytoplasmic side</orientation>
    </subcellularLocation>
    <subcellularLocation>
        <location evidence="1">Cytoplasm</location>
    </subcellularLocation>
    <text evidence="1">Distribution is 50-50.</text>
</comment>
<comment type="similarity">
    <text evidence="1">Belongs to the SecA family.</text>
</comment>
<feature type="chain" id="PRO_0000320734" description="Protein translocase subunit SecA">
    <location>
        <begin position="1"/>
        <end position="1098"/>
    </location>
</feature>
<feature type="region of interest" description="Disordered" evidence="2">
    <location>
        <begin position="1024"/>
        <end position="1098"/>
    </location>
</feature>
<feature type="compositionally biased region" description="Basic and acidic residues" evidence="2">
    <location>
        <begin position="1041"/>
        <end position="1051"/>
    </location>
</feature>
<feature type="compositionally biased region" description="Basic and acidic residues" evidence="2">
    <location>
        <begin position="1058"/>
        <end position="1077"/>
    </location>
</feature>
<feature type="binding site" evidence="1">
    <location>
        <position position="176"/>
    </location>
    <ligand>
        <name>ATP</name>
        <dbReference type="ChEBI" id="CHEBI:30616"/>
    </ligand>
</feature>
<feature type="binding site" evidence="1">
    <location>
        <begin position="194"/>
        <end position="198"/>
    </location>
    <ligand>
        <name>ATP</name>
        <dbReference type="ChEBI" id="CHEBI:30616"/>
    </ligand>
</feature>
<feature type="binding site" evidence="1">
    <location>
        <position position="696"/>
    </location>
    <ligand>
        <name>ATP</name>
        <dbReference type="ChEBI" id="CHEBI:30616"/>
    </ligand>
</feature>
<feature type="binding site" evidence="1">
    <location>
        <position position="1082"/>
    </location>
    <ligand>
        <name>Zn(2+)</name>
        <dbReference type="ChEBI" id="CHEBI:29105"/>
    </ligand>
</feature>
<feature type="binding site" evidence="1">
    <location>
        <position position="1084"/>
    </location>
    <ligand>
        <name>Zn(2+)</name>
        <dbReference type="ChEBI" id="CHEBI:29105"/>
    </ligand>
</feature>
<feature type="binding site" evidence="1">
    <location>
        <position position="1093"/>
    </location>
    <ligand>
        <name>Zn(2+)</name>
        <dbReference type="ChEBI" id="CHEBI:29105"/>
    </ligand>
</feature>
<feature type="binding site" evidence="1">
    <location>
        <position position="1094"/>
    </location>
    <ligand>
        <name>Zn(2+)</name>
        <dbReference type="ChEBI" id="CHEBI:29105"/>
    </ligand>
</feature>